<dbReference type="EC" id="4.1.1.11" evidence="1"/>
<dbReference type="EMBL" id="BX294143">
    <property type="protein sequence ID" value="CAD74603.1"/>
    <property type="molecule type" value="Genomic_DNA"/>
</dbReference>
<dbReference type="RefSeq" id="NP_867058.1">
    <property type="nucleotide sequence ID" value="NC_005027.1"/>
</dbReference>
<dbReference type="SMR" id="Q7UQU4"/>
<dbReference type="FunCoup" id="Q7UQU4">
    <property type="interactions" value="298"/>
</dbReference>
<dbReference type="STRING" id="243090.RB6090"/>
<dbReference type="EnsemblBacteria" id="CAD74603">
    <property type="protein sequence ID" value="CAD74603"/>
    <property type="gene ID" value="RB6090"/>
</dbReference>
<dbReference type="KEGG" id="rba:RB6090"/>
<dbReference type="PATRIC" id="fig|243090.15.peg.2934"/>
<dbReference type="eggNOG" id="COG0853">
    <property type="taxonomic scope" value="Bacteria"/>
</dbReference>
<dbReference type="HOGENOM" id="CLU_115305_0_0_0"/>
<dbReference type="InParanoid" id="Q7UQU4"/>
<dbReference type="OrthoDB" id="9803983at2"/>
<dbReference type="UniPathway" id="UPA00028">
    <property type="reaction ID" value="UER00002"/>
</dbReference>
<dbReference type="Proteomes" id="UP000001025">
    <property type="component" value="Chromosome"/>
</dbReference>
<dbReference type="GO" id="GO:0005829">
    <property type="term" value="C:cytosol"/>
    <property type="evidence" value="ECO:0000318"/>
    <property type="project" value="GO_Central"/>
</dbReference>
<dbReference type="GO" id="GO:0004068">
    <property type="term" value="F:aspartate 1-decarboxylase activity"/>
    <property type="evidence" value="ECO:0000318"/>
    <property type="project" value="GO_Central"/>
</dbReference>
<dbReference type="GO" id="GO:0006523">
    <property type="term" value="P:alanine biosynthetic process"/>
    <property type="evidence" value="ECO:0000318"/>
    <property type="project" value="GO_Central"/>
</dbReference>
<dbReference type="GO" id="GO:0015940">
    <property type="term" value="P:pantothenate biosynthetic process"/>
    <property type="evidence" value="ECO:0000318"/>
    <property type="project" value="GO_Central"/>
</dbReference>
<dbReference type="CDD" id="cd06919">
    <property type="entry name" value="Asp_decarbox"/>
    <property type="match status" value="1"/>
</dbReference>
<dbReference type="Gene3D" id="2.40.40.20">
    <property type="match status" value="1"/>
</dbReference>
<dbReference type="HAMAP" id="MF_00446">
    <property type="entry name" value="PanD"/>
    <property type="match status" value="1"/>
</dbReference>
<dbReference type="InterPro" id="IPR009010">
    <property type="entry name" value="Asp_de-COase-like_dom_sf"/>
</dbReference>
<dbReference type="InterPro" id="IPR003190">
    <property type="entry name" value="Asp_decarbox"/>
</dbReference>
<dbReference type="NCBIfam" id="TIGR00223">
    <property type="entry name" value="panD"/>
    <property type="match status" value="1"/>
</dbReference>
<dbReference type="PANTHER" id="PTHR21012">
    <property type="entry name" value="ASPARTATE 1-DECARBOXYLASE"/>
    <property type="match status" value="1"/>
</dbReference>
<dbReference type="PANTHER" id="PTHR21012:SF0">
    <property type="entry name" value="ASPARTATE 1-DECARBOXYLASE"/>
    <property type="match status" value="1"/>
</dbReference>
<dbReference type="Pfam" id="PF02261">
    <property type="entry name" value="Asp_decarbox"/>
    <property type="match status" value="1"/>
</dbReference>
<dbReference type="SUPFAM" id="SSF50692">
    <property type="entry name" value="ADC-like"/>
    <property type="match status" value="1"/>
</dbReference>
<gene>
    <name evidence="1" type="primary">panD</name>
    <name type="ordered locus">RB6090</name>
</gene>
<reference key="1">
    <citation type="journal article" date="2003" name="Proc. Natl. Acad. Sci. U.S.A.">
        <title>Complete genome sequence of the marine planctomycete Pirellula sp. strain 1.</title>
        <authorList>
            <person name="Gloeckner F.O."/>
            <person name="Kube M."/>
            <person name="Bauer M."/>
            <person name="Teeling H."/>
            <person name="Lombardot T."/>
            <person name="Ludwig W."/>
            <person name="Gade D."/>
            <person name="Beck A."/>
            <person name="Borzym K."/>
            <person name="Heitmann K."/>
            <person name="Rabus R."/>
            <person name="Schlesner H."/>
            <person name="Amann R."/>
            <person name="Reinhardt R."/>
        </authorList>
    </citation>
    <scope>NUCLEOTIDE SEQUENCE [LARGE SCALE GENOMIC DNA]</scope>
    <source>
        <strain>DSM 10527 / NCIMB 13988 / SH1</strain>
    </source>
</reference>
<proteinExistence type="inferred from homology"/>
<protein>
    <recommendedName>
        <fullName evidence="1">Aspartate 1-decarboxylase</fullName>
        <ecNumber evidence="1">4.1.1.11</ecNumber>
    </recommendedName>
    <alternativeName>
        <fullName evidence="1">Aspartate alpha-decarboxylase</fullName>
    </alternativeName>
    <component>
        <recommendedName>
            <fullName evidence="1">Aspartate 1-decarboxylase beta chain</fullName>
        </recommendedName>
    </component>
    <component>
        <recommendedName>
            <fullName evidence="1">Aspartate 1-decarboxylase alpha chain</fullName>
        </recommendedName>
    </component>
</protein>
<feature type="chain" id="PRO_0000023147" description="Aspartate 1-decarboxylase beta chain" evidence="1">
    <location>
        <begin position="1"/>
        <end position="28"/>
    </location>
</feature>
<feature type="chain" id="PRO_0000023148" description="Aspartate 1-decarboxylase alpha chain" evidence="1">
    <location>
        <begin position="29"/>
        <end position="156"/>
    </location>
</feature>
<feature type="active site" description="Schiff-base intermediate with substrate; via pyruvic acid" evidence="1">
    <location>
        <position position="29"/>
    </location>
</feature>
<feature type="active site" description="Proton donor" evidence="1">
    <location>
        <position position="62"/>
    </location>
</feature>
<feature type="binding site" evidence="1">
    <location>
        <position position="61"/>
    </location>
    <ligand>
        <name>substrate</name>
    </ligand>
</feature>
<feature type="binding site" evidence="1">
    <location>
        <begin position="77"/>
        <end position="79"/>
    </location>
    <ligand>
        <name>substrate</name>
    </ligand>
</feature>
<feature type="modified residue" description="Pyruvic acid (Ser)" evidence="1">
    <location>
        <position position="29"/>
    </location>
</feature>
<keyword id="KW-0068">Autocatalytic cleavage</keyword>
<keyword id="KW-0963">Cytoplasm</keyword>
<keyword id="KW-0210">Decarboxylase</keyword>
<keyword id="KW-0456">Lyase</keyword>
<keyword id="KW-0566">Pantothenate biosynthesis</keyword>
<keyword id="KW-0670">Pyruvate</keyword>
<keyword id="KW-1185">Reference proteome</keyword>
<keyword id="KW-0704">Schiff base</keyword>
<keyword id="KW-0865">Zymogen</keyword>
<name>PAND_RHOBA</name>
<organism>
    <name type="scientific">Rhodopirellula baltica (strain DSM 10527 / NCIMB 13988 / SH1)</name>
    <dbReference type="NCBI Taxonomy" id="243090"/>
    <lineage>
        <taxon>Bacteria</taxon>
        <taxon>Pseudomonadati</taxon>
        <taxon>Planctomycetota</taxon>
        <taxon>Planctomycetia</taxon>
        <taxon>Pirellulales</taxon>
        <taxon>Pirellulaceae</taxon>
        <taxon>Rhodopirellula</taxon>
    </lineage>
</organism>
<accession>Q7UQU4</accession>
<comment type="function">
    <text evidence="1">Catalyzes the pyruvoyl-dependent decarboxylation of aspartate to produce beta-alanine.</text>
</comment>
<comment type="catalytic activity">
    <reaction evidence="1">
        <text>L-aspartate + H(+) = beta-alanine + CO2</text>
        <dbReference type="Rhea" id="RHEA:19497"/>
        <dbReference type="ChEBI" id="CHEBI:15378"/>
        <dbReference type="ChEBI" id="CHEBI:16526"/>
        <dbReference type="ChEBI" id="CHEBI:29991"/>
        <dbReference type="ChEBI" id="CHEBI:57966"/>
        <dbReference type="EC" id="4.1.1.11"/>
    </reaction>
</comment>
<comment type="cofactor">
    <cofactor evidence="1">
        <name>pyruvate</name>
        <dbReference type="ChEBI" id="CHEBI:15361"/>
    </cofactor>
    <text evidence="1">Binds 1 pyruvoyl group covalently per subunit.</text>
</comment>
<comment type="pathway">
    <text evidence="1">Cofactor biosynthesis; (R)-pantothenate biosynthesis; beta-alanine from L-aspartate: step 1/1.</text>
</comment>
<comment type="subunit">
    <text evidence="1">Heterooctamer of four alpha and four beta subunits.</text>
</comment>
<comment type="subcellular location">
    <subcellularLocation>
        <location evidence="1">Cytoplasm</location>
    </subcellularLocation>
</comment>
<comment type="PTM">
    <text evidence="1">Is synthesized initially as an inactive proenzyme, which is activated by self-cleavage at a specific serine bond to produce a beta-subunit with a hydroxyl group at its C-terminus and an alpha-subunit with a pyruvoyl group at its N-terminus.</text>
</comment>
<comment type="similarity">
    <text evidence="1">Belongs to the PanD family.</text>
</comment>
<sequence length="156" mass="16828">MVDTPYRKMLAAKIHRATVTGADVNYEGSLTVPPELLVAAKIHPYESLHVWNVTRGTRLETYAIEGLPNSNDVCANGAAAHLIRPGDHVILAAYAMVPEADAATHKPRLIFVDDNNQLSHVGPEIAGPNLRSDSDDTHLVRSTEMTPDGQPLAEGC</sequence>
<evidence type="ECO:0000255" key="1">
    <source>
        <dbReference type="HAMAP-Rule" id="MF_00446"/>
    </source>
</evidence>